<organism>
    <name type="scientific">Mus musculus</name>
    <name type="common">Mouse</name>
    <dbReference type="NCBI Taxonomy" id="10090"/>
    <lineage>
        <taxon>Eukaryota</taxon>
        <taxon>Metazoa</taxon>
        <taxon>Chordata</taxon>
        <taxon>Craniata</taxon>
        <taxon>Vertebrata</taxon>
        <taxon>Euteleostomi</taxon>
        <taxon>Mammalia</taxon>
        <taxon>Eutheria</taxon>
        <taxon>Euarchontoglires</taxon>
        <taxon>Glires</taxon>
        <taxon>Rodentia</taxon>
        <taxon>Myomorpha</taxon>
        <taxon>Muroidea</taxon>
        <taxon>Muridae</taxon>
        <taxon>Murinae</taxon>
        <taxon>Mus</taxon>
        <taxon>Mus</taxon>
    </lineage>
</organism>
<comment type="alternative products">
    <event type="alternative splicing"/>
    <isoform>
        <id>Q8C4P0-1</id>
        <name>1</name>
        <sequence type="displayed"/>
    </isoform>
    <isoform>
        <id>Q8C4P0-2</id>
        <name>2</name>
        <sequence type="described" ref="VSP_015147"/>
    </isoform>
</comment>
<comment type="sequence caution" evidence="4">
    <conflict type="frameshift">
        <sequence resource="EMBL-CDS" id="BAC39905"/>
    </conflict>
</comment>
<keyword id="KW-0025">Alternative splicing</keyword>
<keyword id="KW-1017">Isopeptide bond</keyword>
<keyword id="KW-0597">Phosphoprotein</keyword>
<keyword id="KW-1185">Reference proteome</keyword>
<keyword id="KW-0832">Ubl conjugation</keyword>
<reference key="1">
    <citation type="journal article" date="2005" name="Science">
        <title>The transcriptional landscape of the mammalian genome.</title>
        <authorList>
            <person name="Carninci P."/>
            <person name="Kasukawa T."/>
            <person name="Katayama S."/>
            <person name="Gough J."/>
            <person name="Frith M.C."/>
            <person name="Maeda N."/>
            <person name="Oyama R."/>
            <person name="Ravasi T."/>
            <person name="Lenhard B."/>
            <person name="Wells C."/>
            <person name="Kodzius R."/>
            <person name="Shimokawa K."/>
            <person name="Bajic V.B."/>
            <person name="Brenner S.E."/>
            <person name="Batalov S."/>
            <person name="Forrest A.R."/>
            <person name="Zavolan M."/>
            <person name="Davis M.J."/>
            <person name="Wilming L.G."/>
            <person name="Aidinis V."/>
            <person name="Allen J.E."/>
            <person name="Ambesi-Impiombato A."/>
            <person name="Apweiler R."/>
            <person name="Aturaliya R.N."/>
            <person name="Bailey T.L."/>
            <person name="Bansal M."/>
            <person name="Baxter L."/>
            <person name="Beisel K.W."/>
            <person name="Bersano T."/>
            <person name="Bono H."/>
            <person name="Chalk A.M."/>
            <person name="Chiu K.P."/>
            <person name="Choudhary V."/>
            <person name="Christoffels A."/>
            <person name="Clutterbuck D.R."/>
            <person name="Crowe M.L."/>
            <person name="Dalla E."/>
            <person name="Dalrymple B.P."/>
            <person name="de Bono B."/>
            <person name="Della Gatta G."/>
            <person name="di Bernardo D."/>
            <person name="Down T."/>
            <person name="Engstrom P."/>
            <person name="Fagiolini M."/>
            <person name="Faulkner G."/>
            <person name="Fletcher C.F."/>
            <person name="Fukushima T."/>
            <person name="Furuno M."/>
            <person name="Futaki S."/>
            <person name="Gariboldi M."/>
            <person name="Georgii-Hemming P."/>
            <person name="Gingeras T.R."/>
            <person name="Gojobori T."/>
            <person name="Green R.E."/>
            <person name="Gustincich S."/>
            <person name="Harbers M."/>
            <person name="Hayashi Y."/>
            <person name="Hensch T.K."/>
            <person name="Hirokawa N."/>
            <person name="Hill D."/>
            <person name="Huminiecki L."/>
            <person name="Iacono M."/>
            <person name="Ikeo K."/>
            <person name="Iwama A."/>
            <person name="Ishikawa T."/>
            <person name="Jakt M."/>
            <person name="Kanapin A."/>
            <person name="Katoh M."/>
            <person name="Kawasawa Y."/>
            <person name="Kelso J."/>
            <person name="Kitamura H."/>
            <person name="Kitano H."/>
            <person name="Kollias G."/>
            <person name="Krishnan S.P."/>
            <person name="Kruger A."/>
            <person name="Kummerfeld S.K."/>
            <person name="Kurochkin I.V."/>
            <person name="Lareau L.F."/>
            <person name="Lazarevic D."/>
            <person name="Lipovich L."/>
            <person name="Liu J."/>
            <person name="Liuni S."/>
            <person name="McWilliam S."/>
            <person name="Madan Babu M."/>
            <person name="Madera M."/>
            <person name="Marchionni L."/>
            <person name="Matsuda H."/>
            <person name="Matsuzawa S."/>
            <person name="Miki H."/>
            <person name="Mignone F."/>
            <person name="Miyake S."/>
            <person name="Morris K."/>
            <person name="Mottagui-Tabar S."/>
            <person name="Mulder N."/>
            <person name="Nakano N."/>
            <person name="Nakauchi H."/>
            <person name="Ng P."/>
            <person name="Nilsson R."/>
            <person name="Nishiguchi S."/>
            <person name="Nishikawa S."/>
            <person name="Nori F."/>
            <person name="Ohara O."/>
            <person name="Okazaki Y."/>
            <person name="Orlando V."/>
            <person name="Pang K.C."/>
            <person name="Pavan W.J."/>
            <person name="Pavesi G."/>
            <person name="Pesole G."/>
            <person name="Petrovsky N."/>
            <person name="Piazza S."/>
            <person name="Reed J."/>
            <person name="Reid J.F."/>
            <person name="Ring B.Z."/>
            <person name="Ringwald M."/>
            <person name="Rost B."/>
            <person name="Ruan Y."/>
            <person name="Salzberg S.L."/>
            <person name="Sandelin A."/>
            <person name="Schneider C."/>
            <person name="Schoenbach C."/>
            <person name="Sekiguchi K."/>
            <person name="Semple C.A."/>
            <person name="Seno S."/>
            <person name="Sessa L."/>
            <person name="Sheng Y."/>
            <person name="Shibata Y."/>
            <person name="Shimada H."/>
            <person name="Shimada K."/>
            <person name="Silva D."/>
            <person name="Sinclair B."/>
            <person name="Sperling S."/>
            <person name="Stupka E."/>
            <person name="Sugiura K."/>
            <person name="Sultana R."/>
            <person name="Takenaka Y."/>
            <person name="Taki K."/>
            <person name="Tammoja K."/>
            <person name="Tan S.L."/>
            <person name="Tang S."/>
            <person name="Taylor M.S."/>
            <person name="Tegner J."/>
            <person name="Teichmann S.A."/>
            <person name="Ueda H.R."/>
            <person name="van Nimwegen E."/>
            <person name="Verardo R."/>
            <person name="Wei C.L."/>
            <person name="Yagi K."/>
            <person name="Yamanishi H."/>
            <person name="Zabarovsky E."/>
            <person name="Zhu S."/>
            <person name="Zimmer A."/>
            <person name="Hide W."/>
            <person name="Bult C."/>
            <person name="Grimmond S.M."/>
            <person name="Teasdale R.D."/>
            <person name="Liu E.T."/>
            <person name="Brusic V."/>
            <person name="Quackenbush J."/>
            <person name="Wahlestedt C."/>
            <person name="Mattick J.S."/>
            <person name="Hume D.A."/>
            <person name="Kai C."/>
            <person name="Sasaki D."/>
            <person name="Tomaru Y."/>
            <person name="Fukuda S."/>
            <person name="Kanamori-Katayama M."/>
            <person name="Suzuki M."/>
            <person name="Aoki J."/>
            <person name="Arakawa T."/>
            <person name="Iida J."/>
            <person name="Imamura K."/>
            <person name="Itoh M."/>
            <person name="Kato T."/>
            <person name="Kawaji H."/>
            <person name="Kawagashira N."/>
            <person name="Kawashima T."/>
            <person name="Kojima M."/>
            <person name="Kondo S."/>
            <person name="Konno H."/>
            <person name="Nakano K."/>
            <person name="Ninomiya N."/>
            <person name="Nishio T."/>
            <person name="Okada M."/>
            <person name="Plessy C."/>
            <person name="Shibata K."/>
            <person name="Shiraki T."/>
            <person name="Suzuki S."/>
            <person name="Tagami M."/>
            <person name="Waki K."/>
            <person name="Watahiki A."/>
            <person name="Okamura-Oho Y."/>
            <person name="Suzuki H."/>
            <person name="Kawai J."/>
            <person name="Hayashizaki Y."/>
        </authorList>
    </citation>
    <scope>NUCLEOTIDE SEQUENCE [LARGE SCALE MRNA] (ISOFORM 1)</scope>
    <source>
        <strain>C57BL/6J</strain>
        <tissue>Eye</tissue>
        <tissue>Head</tissue>
    </source>
</reference>
<reference key="2">
    <citation type="journal article" date="2009" name="PLoS Biol.">
        <title>Lineage-specific biology revealed by a finished genome assembly of the mouse.</title>
        <authorList>
            <person name="Church D.M."/>
            <person name="Goodstadt L."/>
            <person name="Hillier L.W."/>
            <person name="Zody M.C."/>
            <person name="Goldstein S."/>
            <person name="She X."/>
            <person name="Bult C.J."/>
            <person name="Agarwala R."/>
            <person name="Cherry J.L."/>
            <person name="DiCuccio M."/>
            <person name="Hlavina W."/>
            <person name="Kapustin Y."/>
            <person name="Meric P."/>
            <person name="Maglott D."/>
            <person name="Birtle Z."/>
            <person name="Marques A.C."/>
            <person name="Graves T."/>
            <person name="Zhou S."/>
            <person name="Teague B."/>
            <person name="Potamousis K."/>
            <person name="Churas C."/>
            <person name="Place M."/>
            <person name="Herschleb J."/>
            <person name="Runnheim R."/>
            <person name="Forrest D."/>
            <person name="Amos-Landgraf J."/>
            <person name="Schwartz D.C."/>
            <person name="Cheng Z."/>
            <person name="Lindblad-Toh K."/>
            <person name="Eichler E.E."/>
            <person name="Ponting C.P."/>
        </authorList>
    </citation>
    <scope>NUCLEOTIDE SEQUENCE [LARGE SCALE GENOMIC DNA]</scope>
    <source>
        <strain>C57BL/6J</strain>
    </source>
</reference>
<reference key="3">
    <citation type="journal article" date="2004" name="Genome Res.">
        <title>The status, quality, and expansion of the NIH full-length cDNA project: the Mammalian Gene Collection (MGC).</title>
        <authorList>
            <consortium name="The MGC Project Team"/>
        </authorList>
    </citation>
    <scope>NUCLEOTIDE SEQUENCE [LARGE SCALE MRNA] (ISOFORM 2)</scope>
    <source>
        <strain>FVB/N-3</strain>
        <tissue>Mammary gland</tissue>
    </source>
</reference>
<dbReference type="EMBL" id="AK081604">
    <property type="protein sequence ID" value="BAC38268.1"/>
    <property type="molecule type" value="mRNA"/>
</dbReference>
<dbReference type="EMBL" id="AK087509">
    <property type="protein sequence ID" value="BAC39905.1"/>
    <property type="status" value="ALT_FRAME"/>
    <property type="molecule type" value="mRNA"/>
</dbReference>
<dbReference type="EMBL" id="AL806512">
    <property type="status" value="NOT_ANNOTATED_CDS"/>
    <property type="molecule type" value="Genomic_DNA"/>
</dbReference>
<dbReference type="EMBL" id="BC037070">
    <property type="protein sequence ID" value="AAH37070.1"/>
    <property type="molecule type" value="mRNA"/>
</dbReference>
<dbReference type="CCDS" id="CCDS18223.1">
    <molecule id="Q8C4P0-1"/>
</dbReference>
<dbReference type="CCDS" id="CCDS18224.1">
    <molecule id="Q8C4P0-2"/>
</dbReference>
<dbReference type="RefSeq" id="NP_001015681.1">
    <molecule id="Q8C4P0-1"/>
    <property type="nucleotide sequence ID" value="NM_001015681.2"/>
</dbReference>
<dbReference type="RefSeq" id="NP_694798.1">
    <molecule id="Q8C4P0-2"/>
    <property type="nucleotide sequence ID" value="NM_153158.5"/>
</dbReference>
<dbReference type="RefSeq" id="XP_006537923.1">
    <property type="nucleotide sequence ID" value="XM_006537860.2"/>
</dbReference>
<dbReference type="RefSeq" id="XP_006537924.1">
    <molecule id="Q8C4P0-2"/>
    <property type="nucleotide sequence ID" value="XM_006537861.3"/>
</dbReference>
<dbReference type="RefSeq" id="XP_036019884.1">
    <molecule id="Q8C4P0-2"/>
    <property type="nucleotide sequence ID" value="XM_036163991.1"/>
</dbReference>
<dbReference type="BioGRID" id="230953">
    <property type="interactions" value="1"/>
</dbReference>
<dbReference type="FunCoup" id="Q8C4P0">
    <property type="interactions" value="763"/>
</dbReference>
<dbReference type="iPTMnet" id="Q8C4P0"/>
<dbReference type="PhosphoSitePlus" id="Q8C4P0"/>
<dbReference type="Antibodypedia" id="15233">
    <property type="antibodies" value="33 antibodies from 13 providers"/>
</dbReference>
<dbReference type="DNASU" id="230259"/>
<dbReference type="Ensembl" id="ENSMUST00000052420.7">
    <molecule id="Q8C4P0-2"/>
    <property type="protein sequence ID" value="ENSMUSP00000062493.7"/>
    <property type="gene ID" value="ENSMUSG00000045071.15"/>
</dbReference>
<dbReference type="Ensembl" id="ENSMUST00000070150.11">
    <molecule id="Q8C4P0-1"/>
    <property type="protein sequence ID" value="ENSMUSP00000065702.5"/>
    <property type="gene ID" value="ENSMUSG00000045071.15"/>
</dbReference>
<dbReference type="GeneID" id="230259"/>
<dbReference type="KEGG" id="mmu:230259"/>
<dbReference type="UCSC" id="uc008taa.2">
    <molecule id="Q8C4P0-2"/>
    <property type="organism name" value="mouse"/>
</dbReference>
<dbReference type="UCSC" id="uc008tab.2">
    <molecule id="Q8C4P0-1"/>
    <property type="organism name" value="mouse"/>
</dbReference>
<dbReference type="AGR" id="MGI:2442164"/>
<dbReference type="MGI" id="MGI:2442164">
    <property type="gene designation" value="E130308A19Rik"/>
</dbReference>
<dbReference type="VEuPathDB" id="HostDB:ENSMUSG00000045071"/>
<dbReference type="GeneTree" id="ENSGT00440000039527"/>
<dbReference type="HOGENOM" id="CLU_022431_0_0_1"/>
<dbReference type="InParanoid" id="Q8C4P0"/>
<dbReference type="OMA" id="YWCVTNG"/>
<dbReference type="OrthoDB" id="5957988at2759"/>
<dbReference type="PhylomeDB" id="Q8C4P0"/>
<dbReference type="TreeFam" id="TF332895"/>
<dbReference type="BioGRID-ORCS" id="230259">
    <property type="hits" value="1 hit in 76 CRISPR screens"/>
</dbReference>
<dbReference type="PRO" id="PR:Q8C4P0"/>
<dbReference type="Proteomes" id="UP000000589">
    <property type="component" value="Chromosome 4"/>
</dbReference>
<dbReference type="RNAct" id="Q8C4P0">
    <property type="molecule type" value="protein"/>
</dbReference>
<dbReference type="Bgee" id="ENSMUSG00000045071">
    <property type="expression patterns" value="Expressed in otolith organ and 225 other cell types or tissues"/>
</dbReference>
<dbReference type="ExpressionAtlas" id="Q8C4P0">
    <property type="expression patterns" value="baseline and differential"/>
</dbReference>
<dbReference type="InterPro" id="IPR021893">
    <property type="entry name" value="DUF3504"/>
</dbReference>
<dbReference type="InterPro" id="IPR042838">
    <property type="entry name" value="KIAA1958"/>
</dbReference>
<dbReference type="PANTHER" id="PTHR46963">
    <property type="entry name" value="SIMILAR TO RIKEN CDNA E130308A19"/>
    <property type="match status" value="1"/>
</dbReference>
<dbReference type="PANTHER" id="PTHR46963:SF1">
    <property type="entry name" value="SIMILAR TO RIKEN CDNA E130308A19"/>
    <property type="match status" value="1"/>
</dbReference>
<dbReference type="Pfam" id="PF12012">
    <property type="entry name" value="DUF3504"/>
    <property type="match status" value="1"/>
</dbReference>
<evidence type="ECO:0000250" key="1">
    <source>
        <dbReference type="UniProtKB" id="Q8N8K9"/>
    </source>
</evidence>
<evidence type="ECO:0000256" key="2">
    <source>
        <dbReference type="SAM" id="MobiDB-lite"/>
    </source>
</evidence>
<evidence type="ECO:0000303" key="3">
    <source>
    </source>
</evidence>
<evidence type="ECO:0000305" key="4"/>
<feature type="chain" id="PRO_0000050812" description="Uncharacterized protein KIAA1958 homolog">
    <location>
        <begin position="1"/>
        <end position="716"/>
    </location>
</feature>
<feature type="region of interest" description="Disordered" evidence="2">
    <location>
        <begin position="84"/>
        <end position="103"/>
    </location>
</feature>
<feature type="region of interest" description="Disordered" evidence="2">
    <location>
        <begin position="153"/>
        <end position="189"/>
    </location>
</feature>
<feature type="modified residue" description="Phosphoserine" evidence="1">
    <location>
        <position position="97"/>
    </location>
</feature>
<feature type="cross-link" description="Glycyl lysine isopeptide (Lys-Gly) (interchain with G-Cter in SUMO2)" evidence="1">
    <location>
        <position position="201"/>
    </location>
</feature>
<feature type="cross-link" description="Glycyl lysine isopeptide (Lys-Gly) (interchain with G-Cter in SUMO2)" evidence="1">
    <location>
        <position position="204"/>
    </location>
</feature>
<feature type="cross-link" description="Glycyl lysine isopeptide (Lys-Gly) (interchain with G-Cter in SUMO2)" evidence="1">
    <location>
        <position position="237"/>
    </location>
</feature>
<feature type="cross-link" description="Glycyl lysine isopeptide (Lys-Gly) (interchain with G-Cter in SUMO2)" evidence="1">
    <location>
        <position position="283"/>
    </location>
</feature>
<feature type="cross-link" description="Glycyl lysine isopeptide (Lys-Gly) (interchain with G-Cter in SUMO2)" evidence="1">
    <location>
        <position position="626"/>
    </location>
</feature>
<feature type="splice variant" id="VSP_015147" description="In isoform 2." evidence="3">
    <original>AYSTKLNKFPVFNINDDLNGLCTSAVSPNTTKATRYALNVWRYWCMTNGLKDHTDITKIPAVKLNELLENFYVTVKKSDGSDFLATSLHAIRRGLDRILKNAGVGFSITSSTFSSSTKKLKEKLWVLSKAGMSGARSRNIVYFSLSDEEEMWQAGCLGDDSPITLLSTVVKYNSQYLNMRTLQEHADLMYGDIELLKDPQNQPYFARTDSVKRESRSGSTRVCHGKIYHEHSRGHKQCPYCLLYKYMYIHRPPTQMEAKSPFYLTARKEATDMGSVWYEEQRMGLRSLRGIVPNLARKVKLENCENFTFVSFTQVSRRLGSHSCCQ</original>
    <variation>DQDERAAELSREQNEKTIRSTQTALRNFREFLISKYPSETREIYVIPCKELDAYLASFFVDARQKDGSEYEPNSLANYQCGLERYLKEHRYGYSITRDKEFKRSQEALKQKQIELRCKGKGNKPHKSMKLTFADELILRKRGLLSRYNPEGLLNLVWLNNTKAFGHCTGFHGSTLKWGDIRLRVTETGLEYLEWIGQDTGDLNAKTKRGGTDSRVYATQHAPQTCPVQDYKEYAQRRPPAMRYEDAPFYLSIKPVVNLAALHWYNCQALGKNKLAKMVKTMCEKGNIPGRKTNFSVYQSCSTLSEAQSNQLVLICNNLSQQAAQSVAGHSSSGNFIVSSYDSSSDTA</variation>
    <location>
        <begin position="391"/>
        <end position="716"/>
    </location>
</feature>
<accession>Q8C4P0</accession>
<accession>B1AX79</accession>
<accession>Q8BN62</accession>
<accession>Q8K1X8</accession>
<sequence length="716" mass="79148">MEDCLHTSSENLSKLVSWAHSHGTICSLIPNLKHLLSEGSHGNLTAMWGCSAGHAYHWPLTATCRAGSQERVCFQDNRSFNSDSPSIIGVPSETQTSPVERYPGRPVKAKLDCNRTRDSCDFSYCSEPSELDEAVEEYEDENTLFDMVCESSVTDEDSDFEPQTQRPQSIARKRPGIVPSSIHSSSQGQMVDECSNDVIIKKIKQEIPEDYYIVANAELTGGVDGPALSLTQMAKPKPQTHAGPSCVGSAKLIPHVTSAINTELDPHILSASPSVISRPIIPKTARVSLASPNRGPPGAHGTAHQVTMQMPVSTSHPNKQISIPLSALQLPGQDEQVASEEFLPHLPSQVSSCEVALSPSVNTEPEVSSSQQQPPAAPTITTEATAQCIPAYSTKLNKFPVFNINDDLNGLCTSAVSPNTTKATRYALNVWRYWCMTNGLKDHTDITKIPAVKLNELLENFYVTVKKSDGSDFLATSLHAIRRGLDRILKNAGVGFSITSSTFSSSTKKLKEKLWVLSKAGMSGARSRNIVYFSLSDEEEMWQAGCLGDDSPITLLSTVVKYNSQYLNMRTLQEHADLMYGDIELLKDPQNQPYFARTDSVKRESRSGSTRVCHGKIYHEHSRGHKQCPYCLLYKYMYIHRPPTQMEAKSPFYLTARKEATDMGSVWYEEQRMGLRSLRGIVPNLARKVKLENCENFTFVSFTQVSRRLGSHSCCQ</sequence>
<proteinExistence type="evidence at transcript level"/>
<protein>
    <recommendedName>
        <fullName>Uncharacterized protein KIAA1958 homolog</fullName>
    </recommendedName>
</protein>
<name>K1958_MOUSE</name>